<feature type="signal peptide" evidence="1">
    <location>
        <begin position="1"/>
        <end position="21"/>
    </location>
</feature>
<feature type="chain" id="PRO_0000430895" description="Three-finger toxin A2">
    <location>
        <begin position="22"/>
        <end position="79"/>
    </location>
</feature>
<feature type="disulfide bond" evidence="1">
    <location>
        <begin position="24"/>
        <end position="41"/>
    </location>
</feature>
<feature type="disulfide bond" evidence="1">
    <location>
        <begin position="34"/>
        <end position="59"/>
    </location>
</feature>
<feature type="disulfide bond" evidence="1">
    <location>
        <begin position="63"/>
        <end position="71"/>
    </location>
</feature>
<feature type="disulfide bond" evidence="1">
    <location>
        <begin position="72"/>
        <end position="77"/>
    </location>
</feature>
<protein>
    <recommendedName>
        <fullName evidence="4">Three-finger toxin A2</fullName>
        <shortName evidence="4">3FTx A2</shortName>
    </recommendedName>
    <alternativeName>
        <fullName evidence="3">Short chain alpha-neurotoxin A2</fullName>
        <shortName evidence="3">MlatA2</shortName>
    </alternativeName>
</protein>
<sequence>MKTLLLTLVVVTIVCLDLGNSLVCYVSGAWQKTCPEGQNKCEKYAVGTMHGSWIYLRGCASTCHEGPYNVCCSTDLCNK</sequence>
<reference key="1">
    <citation type="journal article" date="2013" name="Toxicon">
        <title>Isolation, characterization, cloning and expression of an alpha-neurotoxin from the venom of the Mexican coral snake Micrurus laticollaris (Squamata: Elapidae).</title>
        <authorList>
            <person name="Carbajal-Saucedo A."/>
            <person name="Lopez-Vera E."/>
            <person name="Benard-Valle M."/>
            <person name="Smith E.N."/>
            <person name="Zamudio F."/>
            <person name="de Roodt A.R."/>
            <person name="Olvera-Rodriguez A."/>
        </authorList>
    </citation>
    <scope>NUCLEOTIDE SEQUENCE [MRNA]</scope>
    <scope>SUBCELLULAR LOCATION</scope>
    <source>
        <tissue>Venom</tissue>
        <tissue>Venom gland</tissue>
    </source>
</reference>
<keyword id="KW-1015">Disulfide bond</keyword>
<keyword id="KW-0964">Secreted</keyword>
<keyword id="KW-0732">Signal</keyword>
<keyword id="KW-0800">Toxin</keyword>
<proteinExistence type="inferred from homology"/>
<name>3SX2_MICLL</name>
<dbReference type="EMBL" id="JQ247016">
    <property type="protein sequence ID" value="AFU76493.1"/>
    <property type="molecule type" value="mRNA"/>
</dbReference>
<dbReference type="SMR" id="K9MCX0"/>
<dbReference type="GO" id="GO:0005576">
    <property type="term" value="C:extracellular region"/>
    <property type="evidence" value="ECO:0007669"/>
    <property type="project" value="UniProtKB-SubCell"/>
</dbReference>
<dbReference type="GO" id="GO:0090729">
    <property type="term" value="F:toxin activity"/>
    <property type="evidence" value="ECO:0007669"/>
    <property type="project" value="UniProtKB-KW"/>
</dbReference>
<dbReference type="CDD" id="cd00206">
    <property type="entry name" value="TFP_snake_toxin"/>
    <property type="match status" value="1"/>
</dbReference>
<dbReference type="Gene3D" id="2.10.60.10">
    <property type="entry name" value="CD59"/>
    <property type="match status" value="1"/>
</dbReference>
<dbReference type="InterPro" id="IPR003571">
    <property type="entry name" value="Snake_3FTx"/>
</dbReference>
<dbReference type="InterPro" id="IPR045860">
    <property type="entry name" value="Snake_toxin-like_sf"/>
</dbReference>
<dbReference type="InterPro" id="IPR054131">
    <property type="entry name" value="Toxin_cobra-type"/>
</dbReference>
<dbReference type="Pfam" id="PF21947">
    <property type="entry name" value="Toxin_cobra-type"/>
    <property type="match status" value="1"/>
</dbReference>
<dbReference type="SUPFAM" id="SSF57302">
    <property type="entry name" value="Snake toxin-like"/>
    <property type="match status" value="1"/>
</dbReference>
<accession>K9MCX0</accession>
<comment type="subcellular location">
    <subcellularLocation>
        <location evidence="2">Secreted</location>
    </subcellularLocation>
</comment>
<comment type="tissue specificity">
    <text evidence="4">Expressed by the venom gland.</text>
</comment>
<comment type="miscellaneous">
    <text evidence="2">This toxin has not been detected in venom.</text>
</comment>
<comment type="similarity">
    <text evidence="4">Belongs to the three-finger toxin family. Short-chain subfamily.</text>
</comment>
<organism>
    <name type="scientific">Micrurus laticollaris</name>
    <name type="common">Balsas coral snake</name>
    <dbReference type="NCBI Taxonomy" id="1240351"/>
    <lineage>
        <taxon>Eukaryota</taxon>
        <taxon>Metazoa</taxon>
        <taxon>Chordata</taxon>
        <taxon>Craniata</taxon>
        <taxon>Vertebrata</taxon>
        <taxon>Euteleostomi</taxon>
        <taxon>Lepidosauria</taxon>
        <taxon>Squamata</taxon>
        <taxon>Bifurcata</taxon>
        <taxon>Unidentata</taxon>
        <taxon>Episquamata</taxon>
        <taxon>Toxicofera</taxon>
        <taxon>Serpentes</taxon>
        <taxon>Colubroidea</taxon>
        <taxon>Elapidae</taxon>
        <taxon>Elapinae</taxon>
        <taxon>Micrurus</taxon>
    </lineage>
</organism>
<evidence type="ECO:0000250" key="1">
    <source>
        <dbReference type="UniProtKB" id="Q8QGR0"/>
    </source>
</evidence>
<evidence type="ECO:0000269" key="2">
    <source>
    </source>
</evidence>
<evidence type="ECO:0000303" key="3">
    <source>
    </source>
</evidence>
<evidence type="ECO:0000305" key="4"/>